<gene>
    <name type="primary">merD</name>
</gene>
<sequence>MSAYTVSQLAHNAGVSVHIVRDYLVRGLLRPVACTTGGYGVFDDAALQRLCFVRAAFEAGIGLDALARLCRALDAADGAQAAAQLAVVRQLVERRRAALAHLDAQLASMPAERAHEEALP</sequence>
<evidence type="ECO:0000255" key="1">
    <source>
        <dbReference type="PROSITE-ProRule" id="PRU00254"/>
    </source>
</evidence>
<evidence type="ECO:0000305" key="2"/>
<organism>
    <name type="scientific">Shigella flexneri</name>
    <dbReference type="NCBI Taxonomy" id="623"/>
    <lineage>
        <taxon>Bacteria</taxon>
        <taxon>Pseudomonadati</taxon>
        <taxon>Pseudomonadota</taxon>
        <taxon>Gammaproteobacteria</taxon>
        <taxon>Enterobacterales</taxon>
        <taxon>Enterobacteriaceae</taxon>
        <taxon>Shigella</taxon>
    </lineage>
</organism>
<geneLocation type="plasmid">
    <name>IncFII R100</name>
    <name>NR1</name>
</geneLocation>
<geneLocation type="plasmid">
    <name>pLV501</name>
</geneLocation>
<name>MERD_SHIFL</name>
<reference key="1">
    <citation type="journal article" date="1986" name="Mol. Gen. Genet.">
        <title>The nucleotide sequence of the mercuric resistance operons of plasmid R100 and transposon Tn501: further evidence for mer genes which enhance the activity of the mercuric ion detoxification system.</title>
        <authorList>
            <person name="Brown N.L."/>
            <person name="Misra T.K."/>
            <person name="Winnie J.N."/>
            <person name="Schmidt A."/>
            <person name="Seiff M."/>
            <person name="Silver S."/>
        </authorList>
    </citation>
    <scope>NUCLEOTIDE SEQUENCE [GENOMIC DNA]</scope>
</reference>
<reference key="2">
    <citation type="submission" date="1994-03" db="EMBL/GenBank/DDBJ databases">
        <title>The epithelial cell invasive determinant of enteropathogenic Escherichia coli plasmid pLV501 is encoded on Tn4355, a novel Tn21-type transposon.</title>
        <authorList>
            <person name="Fletcher J.N."/>
            <person name="Hart C.A."/>
            <person name="Batt R.M."/>
            <person name="Saunders J.R."/>
        </authorList>
    </citation>
    <scope>NUCLEOTIDE SEQUENCE [GENOMIC DNA]</scope>
    <source>
        <plasmid>pLV501</plasmid>
    </source>
</reference>
<reference key="3">
    <citation type="journal article" date="1985" name="Gene">
        <title>Mercuric reductase structural genes from plasmid R100 and transposon Tn501: functional domains of the enzyme.</title>
        <authorList>
            <person name="Misra T.K."/>
            <person name="Brown N.L."/>
            <person name="Haberstroh L."/>
            <person name="Schmidt A."/>
            <person name="Goddette D."/>
            <person name="Silver S."/>
        </authorList>
    </citation>
    <scope>NUCLEOTIDE SEQUENCE [GENOMIC DNA] OF 1-6</scope>
</reference>
<protein>
    <recommendedName>
        <fullName>HTH-type transcriptional regulator MerD</fullName>
    </recommendedName>
    <alternativeName>
        <fullName>Mercuric resistance protein MerD</fullName>
    </alternativeName>
</protein>
<feature type="chain" id="PRO_0000098134" description="HTH-type transcriptional regulator MerD">
    <location>
        <begin position="1"/>
        <end position="120"/>
    </location>
</feature>
<feature type="domain" description="HTH merR-type" evidence="1">
    <location>
        <begin position="3"/>
        <end position="72"/>
    </location>
</feature>
<feature type="DNA-binding region" description="H-T-H motif" evidence="1">
    <location>
        <begin position="6"/>
        <end position="25"/>
    </location>
</feature>
<feature type="sequence conflict" description="In Ref. 2; AAA83540." evidence="2" ref="2">
    <original>V</original>
    <variation>L</variation>
    <location>
        <position position="88"/>
    </location>
</feature>
<proteinExistence type="predicted"/>
<accession>P20102</accession>
<keyword id="KW-0238">DNA-binding</keyword>
<keyword id="KW-0475">Mercuric resistance</keyword>
<keyword id="KW-0614">Plasmid</keyword>
<keyword id="KW-0804">Transcription</keyword>
<keyword id="KW-0805">Transcription regulation</keyword>
<dbReference type="EMBL" id="J01730">
    <property type="protein sequence ID" value="AAA92264.1"/>
    <property type="molecule type" value="Genomic_DNA"/>
</dbReference>
<dbReference type="EMBL" id="X03405">
    <property type="protein sequence ID" value="CAA27139.1"/>
    <property type="molecule type" value="Genomic_DNA"/>
</dbReference>
<dbReference type="EMBL" id="L29404">
    <property type="protein sequence ID" value="AAA83540.2"/>
    <property type="molecule type" value="Genomic_DNA"/>
</dbReference>
<dbReference type="PIR" id="A29503">
    <property type="entry name" value="A29503"/>
</dbReference>
<dbReference type="SMR" id="P20102"/>
<dbReference type="GO" id="GO:0003677">
    <property type="term" value="F:DNA binding"/>
    <property type="evidence" value="ECO:0007669"/>
    <property type="project" value="UniProtKB-KW"/>
</dbReference>
<dbReference type="GO" id="GO:0003700">
    <property type="term" value="F:DNA-binding transcription factor activity"/>
    <property type="evidence" value="ECO:0007669"/>
    <property type="project" value="InterPro"/>
</dbReference>
<dbReference type="GO" id="GO:0045892">
    <property type="term" value="P:negative regulation of DNA-templated transcription"/>
    <property type="evidence" value="ECO:0007669"/>
    <property type="project" value="InterPro"/>
</dbReference>
<dbReference type="GO" id="GO:0046689">
    <property type="term" value="P:response to mercury ion"/>
    <property type="evidence" value="ECO:0007669"/>
    <property type="project" value="UniProtKB-KW"/>
</dbReference>
<dbReference type="Gene3D" id="1.10.1660.10">
    <property type="match status" value="1"/>
</dbReference>
<dbReference type="InterPro" id="IPR009061">
    <property type="entry name" value="DNA-bd_dom_put_sf"/>
</dbReference>
<dbReference type="InterPro" id="IPR011797">
    <property type="entry name" value="MerD"/>
</dbReference>
<dbReference type="InterPro" id="IPR000551">
    <property type="entry name" value="MerR-type_HTH_dom"/>
</dbReference>
<dbReference type="InterPro" id="IPR047057">
    <property type="entry name" value="MerR_fam"/>
</dbReference>
<dbReference type="NCBIfam" id="NF033783">
    <property type="entry name" value="coreg_MerD"/>
    <property type="match status" value="1"/>
</dbReference>
<dbReference type="NCBIfam" id="TIGR02054">
    <property type="entry name" value="MerD"/>
    <property type="match status" value="1"/>
</dbReference>
<dbReference type="PANTHER" id="PTHR30204:SF93">
    <property type="entry name" value="HTH MERR-TYPE DOMAIN-CONTAINING PROTEIN"/>
    <property type="match status" value="1"/>
</dbReference>
<dbReference type="PANTHER" id="PTHR30204">
    <property type="entry name" value="REDOX-CYCLING DRUG-SENSING TRANSCRIPTIONAL ACTIVATOR SOXR"/>
    <property type="match status" value="1"/>
</dbReference>
<dbReference type="Pfam" id="PF13411">
    <property type="entry name" value="MerR_1"/>
    <property type="match status" value="1"/>
</dbReference>
<dbReference type="PRINTS" id="PR00040">
    <property type="entry name" value="HTHMERR"/>
</dbReference>
<dbReference type="SMART" id="SM00422">
    <property type="entry name" value="HTH_MERR"/>
    <property type="match status" value="1"/>
</dbReference>
<dbReference type="SUPFAM" id="SSF46955">
    <property type="entry name" value="Putative DNA-binding domain"/>
    <property type="match status" value="1"/>
</dbReference>
<dbReference type="PROSITE" id="PS50937">
    <property type="entry name" value="HTH_MERR_2"/>
    <property type="match status" value="1"/>
</dbReference>